<reference key="1">
    <citation type="journal article" date="2014" name="Stand. Genomic Sci.">
        <title>Complete genome sequence of Anabaena variabilis ATCC 29413.</title>
        <authorList>
            <person name="Thiel T."/>
            <person name="Pratte B.S."/>
            <person name="Zhong J."/>
            <person name="Goodwin L."/>
            <person name="Copeland A."/>
            <person name="Lucas S."/>
            <person name="Han C."/>
            <person name="Pitluck S."/>
            <person name="Land M.L."/>
            <person name="Kyrpides N.C."/>
            <person name="Woyke T."/>
        </authorList>
    </citation>
    <scope>NUCLEOTIDE SEQUENCE [LARGE SCALE GENOMIC DNA]</scope>
    <source>
        <strain>ATCC 29413 / PCC 7937</strain>
    </source>
</reference>
<dbReference type="EC" id="6.3.5.3" evidence="1"/>
<dbReference type="EC" id="3.5.1.2" evidence="1"/>
<dbReference type="EMBL" id="CP000117">
    <property type="protein sequence ID" value="ABA20033.1"/>
    <property type="molecule type" value="Genomic_DNA"/>
</dbReference>
<dbReference type="SMR" id="Q3MG53"/>
<dbReference type="STRING" id="240292.Ava_0407"/>
<dbReference type="KEGG" id="ava:Ava_0407"/>
<dbReference type="eggNOG" id="COG0047">
    <property type="taxonomic scope" value="Bacteria"/>
</dbReference>
<dbReference type="HOGENOM" id="CLU_001031_3_1_3"/>
<dbReference type="UniPathway" id="UPA00074">
    <property type="reaction ID" value="UER00128"/>
</dbReference>
<dbReference type="Proteomes" id="UP000002533">
    <property type="component" value="Chromosome"/>
</dbReference>
<dbReference type="GO" id="GO:0005737">
    <property type="term" value="C:cytoplasm"/>
    <property type="evidence" value="ECO:0007669"/>
    <property type="project" value="UniProtKB-SubCell"/>
</dbReference>
<dbReference type="GO" id="GO:0005524">
    <property type="term" value="F:ATP binding"/>
    <property type="evidence" value="ECO:0007669"/>
    <property type="project" value="UniProtKB-KW"/>
</dbReference>
<dbReference type="GO" id="GO:0004359">
    <property type="term" value="F:glutaminase activity"/>
    <property type="evidence" value="ECO:0007669"/>
    <property type="project" value="UniProtKB-EC"/>
</dbReference>
<dbReference type="GO" id="GO:0004642">
    <property type="term" value="F:phosphoribosylformylglycinamidine synthase activity"/>
    <property type="evidence" value="ECO:0007669"/>
    <property type="project" value="UniProtKB-UniRule"/>
</dbReference>
<dbReference type="GO" id="GO:0006189">
    <property type="term" value="P:'de novo' IMP biosynthetic process"/>
    <property type="evidence" value="ECO:0007669"/>
    <property type="project" value="UniProtKB-UniRule"/>
</dbReference>
<dbReference type="CDD" id="cd01740">
    <property type="entry name" value="GATase1_FGAR_AT"/>
    <property type="match status" value="1"/>
</dbReference>
<dbReference type="FunFam" id="3.40.50.880:FF:000019">
    <property type="entry name" value="Phosphoribosylformylglycinamidine synthase subunit PurQ"/>
    <property type="match status" value="1"/>
</dbReference>
<dbReference type="Gene3D" id="3.40.50.880">
    <property type="match status" value="1"/>
</dbReference>
<dbReference type="HAMAP" id="MF_00421">
    <property type="entry name" value="PurQ"/>
    <property type="match status" value="1"/>
</dbReference>
<dbReference type="InterPro" id="IPR029062">
    <property type="entry name" value="Class_I_gatase-like"/>
</dbReference>
<dbReference type="InterPro" id="IPR010075">
    <property type="entry name" value="PRibForGlyAmidine_synth_PurQ"/>
</dbReference>
<dbReference type="NCBIfam" id="TIGR01737">
    <property type="entry name" value="FGAM_synth_I"/>
    <property type="match status" value="1"/>
</dbReference>
<dbReference type="NCBIfam" id="NF002957">
    <property type="entry name" value="PRK03619.1"/>
    <property type="match status" value="1"/>
</dbReference>
<dbReference type="PANTHER" id="PTHR47552">
    <property type="entry name" value="PHOSPHORIBOSYLFORMYLGLYCINAMIDINE SYNTHASE SUBUNIT PURQ"/>
    <property type="match status" value="1"/>
</dbReference>
<dbReference type="PANTHER" id="PTHR47552:SF1">
    <property type="entry name" value="PHOSPHORIBOSYLFORMYLGLYCINAMIDINE SYNTHASE SUBUNIT PURQ"/>
    <property type="match status" value="1"/>
</dbReference>
<dbReference type="Pfam" id="PF13507">
    <property type="entry name" value="GATase_5"/>
    <property type="match status" value="1"/>
</dbReference>
<dbReference type="PIRSF" id="PIRSF001586">
    <property type="entry name" value="FGAM_synth_I"/>
    <property type="match status" value="1"/>
</dbReference>
<dbReference type="SMART" id="SM01211">
    <property type="entry name" value="GATase_5"/>
    <property type="match status" value="1"/>
</dbReference>
<dbReference type="SUPFAM" id="SSF52317">
    <property type="entry name" value="Class I glutamine amidotransferase-like"/>
    <property type="match status" value="1"/>
</dbReference>
<dbReference type="PROSITE" id="PS51273">
    <property type="entry name" value="GATASE_TYPE_1"/>
    <property type="match status" value="1"/>
</dbReference>
<protein>
    <recommendedName>
        <fullName evidence="1">Phosphoribosylformylglycinamidine synthase subunit PurQ</fullName>
        <shortName evidence="1">FGAM synthase</shortName>
        <ecNumber evidence="1">6.3.5.3</ecNumber>
    </recommendedName>
    <alternativeName>
        <fullName evidence="1">Formylglycinamide ribonucleotide amidotransferase subunit I</fullName>
        <shortName evidence="1">FGAR amidotransferase I</shortName>
        <shortName evidence="1">FGAR-AT I</shortName>
    </alternativeName>
    <alternativeName>
        <fullName evidence="1">Glutaminase PurQ</fullName>
        <ecNumber evidence="1">3.5.1.2</ecNumber>
    </alternativeName>
    <alternativeName>
        <fullName evidence="1">Phosphoribosylformylglycinamidine synthase subunit I</fullName>
    </alternativeName>
</protein>
<keyword id="KW-0067">ATP-binding</keyword>
<keyword id="KW-0963">Cytoplasm</keyword>
<keyword id="KW-0315">Glutamine amidotransferase</keyword>
<keyword id="KW-0378">Hydrolase</keyword>
<keyword id="KW-0436">Ligase</keyword>
<keyword id="KW-0547">Nucleotide-binding</keyword>
<keyword id="KW-0658">Purine biosynthesis</keyword>
<organism>
    <name type="scientific">Trichormus variabilis (strain ATCC 29413 / PCC 7937)</name>
    <name type="common">Anabaena variabilis</name>
    <dbReference type="NCBI Taxonomy" id="240292"/>
    <lineage>
        <taxon>Bacteria</taxon>
        <taxon>Bacillati</taxon>
        <taxon>Cyanobacteriota</taxon>
        <taxon>Cyanophyceae</taxon>
        <taxon>Nostocales</taxon>
        <taxon>Nostocaceae</taxon>
        <taxon>Trichormus</taxon>
    </lineage>
</organism>
<proteinExistence type="inferred from homology"/>
<gene>
    <name evidence="1" type="primary">purQ</name>
    <name type="ordered locus">Ava_0407</name>
</gene>
<evidence type="ECO:0000255" key="1">
    <source>
        <dbReference type="HAMAP-Rule" id="MF_00421"/>
    </source>
</evidence>
<sequence>MKFGVVVFPGSNCDRDVAYVTRDLLGQPTRMVWHQDTDIADLDVVIIPGGFSYGDYLRCGAIARFSPVMQQVVEHAQKGKLVLGICNGFQVLTEAGLLPGALARNRDLHFICDRVPLTVESTNSLWTQAYNPGEVITLPIAHGEGRFYADEATLSEIEDNGQVLFRYAGENPNGSLNNIAGICDRQGNVLGMMPHPERASDPVLGGSDGLKLFQGLLEKVVALA</sequence>
<name>PURQ_TRIV2</name>
<comment type="function">
    <text evidence="1">Part of the phosphoribosylformylglycinamidine synthase complex involved in the purines biosynthetic pathway. Catalyzes the ATP-dependent conversion of formylglycinamide ribonucleotide (FGAR) and glutamine to yield formylglycinamidine ribonucleotide (FGAM) and glutamate. The FGAM synthase complex is composed of three subunits. PurQ produces an ammonia molecule by converting glutamine to glutamate. PurL transfers the ammonia molecule to FGAR to form FGAM in an ATP-dependent manner. PurS interacts with PurQ and PurL and is thought to assist in the transfer of the ammonia molecule from PurQ to PurL.</text>
</comment>
<comment type="catalytic activity">
    <reaction evidence="1">
        <text>N(2)-formyl-N(1)-(5-phospho-beta-D-ribosyl)glycinamide + L-glutamine + ATP + H2O = 2-formamido-N(1)-(5-O-phospho-beta-D-ribosyl)acetamidine + L-glutamate + ADP + phosphate + H(+)</text>
        <dbReference type="Rhea" id="RHEA:17129"/>
        <dbReference type="ChEBI" id="CHEBI:15377"/>
        <dbReference type="ChEBI" id="CHEBI:15378"/>
        <dbReference type="ChEBI" id="CHEBI:29985"/>
        <dbReference type="ChEBI" id="CHEBI:30616"/>
        <dbReference type="ChEBI" id="CHEBI:43474"/>
        <dbReference type="ChEBI" id="CHEBI:58359"/>
        <dbReference type="ChEBI" id="CHEBI:147286"/>
        <dbReference type="ChEBI" id="CHEBI:147287"/>
        <dbReference type="ChEBI" id="CHEBI:456216"/>
        <dbReference type="EC" id="6.3.5.3"/>
    </reaction>
</comment>
<comment type="catalytic activity">
    <reaction evidence="1">
        <text>L-glutamine + H2O = L-glutamate + NH4(+)</text>
        <dbReference type="Rhea" id="RHEA:15889"/>
        <dbReference type="ChEBI" id="CHEBI:15377"/>
        <dbReference type="ChEBI" id="CHEBI:28938"/>
        <dbReference type="ChEBI" id="CHEBI:29985"/>
        <dbReference type="ChEBI" id="CHEBI:58359"/>
        <dbReference type="EC" id="3.5.1.2"/>
    </reaction>
</comment>
<comment type="pathway">
    <text evidence="1">Purine metabolism; IMP biosynthesis via de novo pathway; 5-amino-1-(5-phospho-D-ribosyl)imidazole from N(2)-formyl-N(1)-(5-phospho-D-ribosyl)glycinamide: step 1/2.</text>
</comment>
<comment type="subunit">
    <text evidence="1">Part of the FGAM synthase complex composed of 1 PurL, 1 PurQ and 2 PurS subunits.</text>
</comment>
<comment type="subcellular location">
    <subcellularLocation>
        <location evidence="1">Cytoplasm</location>
    </subcellularLocation>
</comment>
<feature type="chain" id="PRO_0000252698" description="Phosphoribosylformylglycinamidine synthase subunit PurQ">
    <location>
        <begin position="1"/>
        <end position="224"/>
    </location>
</feature>
<feature type="domain" description="Glutamine amidotransferase type-1" evidence="1">
    <location>
        <begin position="3"/>
        <end position="224"/>
    </location>
</feature>
<feature type="active site" description="Nucleophile" evidence="1">
    <location>
        <position position="86"/>
    </location>
</feature>
<feature type="active site" evidence="1">
    <location>
        <position position="195"/>
    </location>
</feature>
<feature type="active site" evidence="1">
    <location>
        <position position="197"/>
    </location>
</feature>
<accession>Q3MG53</accession>